<sequence>MGSKLSKKKKGYNVNDEKAKDKDKKAEGAGTEEEGTQKESEPQAAADATEVKESAEEKPKDAADGEAKAEEKEADKAAAKEEAPKAEPEKSEGAAEEQPEPAPAPEQEAAAPGPAAGGEAPKAGEASAESTGAADGAPQEEGEAKKTEAPAAGPEAKSDAAPAASDSKPSTEPAPSSKETPAASEAPSSAAKAPAPAAPAAEPQAEAPVASSEQSVAVKE</sequence>
<feature type="initiator methionine" description="Removed" evidence="4">
    <location>
        <position position="1"/>
    </location>
</feature>
<feature type="chain" id="PRO_0000142897" description="Brain acid soluble protein 1">
    <location>
        <begin position="2"/>
        <end position="220"/>
    </location>
</feature>
<feature type="region of interest" description="Disordered" evidence="3">
    <location>
        <begin position="1"/>
        <end position="220"/>
    </location>
</feature>
<feature type="compositionally biased region" description="Basic residues" evidence="3">
    <location>
        <begin position="1"/>
        <end position="11"/>
    </location>
</feature>
<feature type="compositionally biased region" description="Basic and acidic residues" evidence="3">
    <location>
        <begin position="15"/>
        <end position="27"/>
    </location>
</feature>
<feature type="compositionally biased region" description="Basic and acidic residues" evidence="3">
    <location>
        <begin position="49"/>
        <end position="93"/>
    </location>
</feature>
<feature type="compositionally biased region" description="Low complexity" evidence="3">
    <location>
        <begin position="105"/>
        <end position="137"/>
    </location>
</feature>
<feature type="compositionally biased region" description="Low complexity" evidence="3">
    <location>
        <begin position="149"/>
        <end position="213"/>
    </location>
</feature>
<feature type="modified residue" description="Phosphothreonine" evidence="1">
    <location>
        <position position="31"/>
    </location>
</feature>
<feature type="modified residue" description="Phosphothreonine" evidence="1">
    <location>
        <position position="36"/>
    </location>
</feature>
<feature type="modified residue" description="Phosphoserine" evidence="2">
    <location>
        <position position="40"/>
    </location>
</feature>
<feature type="modified residue" description="Phosphoserine" evidence="6">
    <location>
        <position position="91"/>
    </location>
</feature>
<feature type="modified residue" description="Phosphoserine" evidence="6">
    <location>
        <position position="127"/>
    </location>
</feature>
<feature type="modified residue" description="Phosphoserine" evidence="6">
    <location>
        <position position="130"/>
    </location>
</feature>
<feature type="modified residue" description="Phosphoserine" evidence="1">
    <location>
        <position position="158"/>
    </location>
</feature>
<feature type="modified residue" description="Phosphoserine" evidence="1">
    <location>
        <position position="165"/>
    </location>
</feature>
<feature type="modified residue" description="Phosphoserine" evidence="1">
    <location>
        <position position="167"/>
    </location>
</feature>
<feature type="modified residue" description="Phosphoserine" evidence="1">
    <location>
        <position position="170"/>
    </location>
</feature>
<feature type="modified residue" description="Phosphoserine" evidence="2">
    <location>
        <position position="189"/>
    </location>
</feature>
<feature type="modified residue" description="Phosphoserine" evidence="1">
    <location>
        <position position="212"/>
    </location>
</feature>
<feature type="lipid moiety-binding region" description="N-myristoyl glycine" evidence="4">
    <location>
        <position position="2"/>
    </location>
</feature>
<feature type="cross-link" description="Glycyl lysine isopeptide (Lys-Gly) (interchain with G-Cter in SUMO2)" evidence="1">
    <location>
        <position position="25"/>
    </location>
</feature>
<feature type="cross-link" description="Glycyl lysine isopeptide (Lys-Gly) (interchain with G-Cter in SUMO2)" evidence="1">
    <location>
        <position position="85"/>
    </location>
</feature>
<feature type="cross-link" description="Glycyl lysine isopeptide (Lys-Gly) (interchain with G-Cter in SUMO2)" evidence="1">
    <location>
        <position position="157"/>
    </location>
</feature>
<proteinExistence type="evidence at protein level"/>
<dbReference type="EMBL" id="D14441">
    <property type="protein sequence ID" value="BAA03333.1"/>
    <property type="molecule type" value="mRNA"/>
</dbReference>
<dbReference type="PIR" id="A46597">
    <property type="entry name" value="A46597"/>
</dbReference>
<dbReference type="RefSeq" id="NP_071636.1">
    <property type="nucleotide sequence ID" value="NM_022300.1"/>
</dbReference>
<dbReference type="BioGRID" id="248987">
    <property type="interactions" value="10"/>
</dbReference>
<dbReference type="ELM" id="Q05175"/>
<dbReference type="FunCoup" id="Q05175">
    <property type="interactions" value="146"/>
</dbReference>
<dbReference type="IntAct" id="Q05175">
    <property type="interactions" value="1"/>
</dbReference>
<dbReference type="MINT" id="Q05175"/>
<dbReference type="STRING" id="10116.ENSRNOP00000071894"/>
<dbReference type="iPTMnet" id="Q05175"/>
<dbReference type="PhosphoSitePlus" id="Q05175"/>
<dbReference type="SwissPalm" id="Q05175"/>
<dbReference type="jPOST" id="Q05175"/>
<dbReference type="PeptideAtlas" id="Q05175"/>
<dbReference type="GeneID" id="64160"/>
<dbReference type="KEGG" id="rno:64160"/>
<dbReference type="UCSC" id="RGD:621491">
    <property type="organism name" value="rat"/>
</dbReference>
<dbReference type="AGR" id="RGD:621491"/>
<dbReference type="CTD" id="10409"/>
<dbReference type="RGD" id="621491">
    <property type="gene designation" value="Basp1"/>
</dbReference>
<dbReference type="InParanoid" id="Q05175"/>
<dbReference type="Reactome" id="R-RNO-9035034">
    <property type="pathway name" value="RHOF GTPase cycle"/>
</dbReference>
<dbReference type="PRO" id="PR:Q05175"/>
<dbReference type="Proteomes" id="UP000002494">
    <property type="component" value="Unplaced"/>
</dbReference>
<dbReference type="GO" id="GO:0000785">
    <property type="term" value="C:chromatin"/>
    <property type="evidence" value="ECO:0000266"/>
    <property type="project" value="RGD"/>
</dbReference>
<dbReference type="GO" id="GO:0008180">
    <property type="term" value="C:COP9 signalosome"/>
    <property type="evidence" value="ECO:0000266"/>
    <property type="project" value="RGD"/>
</dbReference>
<dbReference type="GO" id="GO:0005737">
    <property type="term" value="C:cytoplasm"/>
    <property type="evidence" value="ECO:0000314"/>
    <property type="project" value="UniProtKB"/>
</dbReference>
<dbReference type="GO" id="GO:0030426">
    <property type="term" value="C:growth cone"/>
    <property type="evidence" value="ECO:0007669"/>
    <property type="project" value="UniProtKB-SubCell"/>
</dbReference>
<dbReference type="GO" id="GO:0016363">
    <property type="term" value="C:nuclear matrix"/>
    <property type="evidence" value="ECO:0000266"/>
    <property type="project" value="RGD"/>
</dbReference>
<dbReference type="GO" id="GO:0016607">
    <property type="term" value="C:nuclear speck"/>
    <property type="evidence" value="ECO:0000250"/>
    <property type="project" value="UniProtKB"/>
</dbReference>
<dbReference type="GO" id="GO:0005634">
    <property type="term" value="C:nucleus"/>
    <property type="evidence" value="ECO:0000250"/>
    <property type="project" value="UniProtKB"/>
</dbReference>
<dbReference type="GO" id="GO:0005886">
    <property type="term" value="C:plasma membrane"/>
    <property type="evidence" value="ECO:0007669"/>
    <property type="project" value="UniProtKB-SubCell"/>
</dbReference>
<dbReference type="GO" id="GO:0016605">
    <property type="term" value="C:PML body"/>
    <property type="evidence" value="ECO:0000266"/>
    <property type="project" value="RGD"/>
</dbReference>
<dbReference type="GO" id="GO:0005516">
    <property type="term" value="F:calmodulin binding"/>
    <property type="evidence" value="ECO:0000266"/>
    <property type="project" value="RGD"/>
</dbReference>
<dbReference type="GO" id="GO:0019904">
    <property type="term" value="F:protein domain specific binding"/>
    <property type="evidence" value="ECO:0000266"/>
    <property type="project" value="RGD"/>
</dbReference>
<dbReference type="GO" id="GO:0000976">
    <property type="term" value="F:transcription cis-regulatory region binding"/>
    <property type="evidence" value="ECO:0000250"/>
    <property type="project" value="UniProtKB"/>
</dbReference>
<dbReference type="GO" id="GO:0003714">
    <property type="term" value="F:transcription corepressor activity"/>
    <property type="evidence" value="ECO:0000250"/>
    <property type="project" value="UniProtKB"/>
</dbReference>
<dbReference type="GO" id="GO:0045892">
    <property type="term" value="P:negative regulation of DNA-templated transcription"/>
    <property type="evidence" value="ECO:0000250"/>
    <property type="project" value="UniProtKB"/>
</dbReference>
<dbReference type="GO" id="GO:0072112">
    <property type="term" value="P:podocyte differentiation"/>
    <property type="evidence" value="ECO:0000266"/>
    <property type="project" value="RGD"/>
</dbReference>
<dbReference type="GO" id="GO:0051260">
    <property type="term" value="P:protein homooligomerization"/>
    <property type="evidence" value="ECO:0000266"/>
    <property type="project" value="RGD"/>
</dbReference>
<dbReference type="GO" id="GO:0097435">
    <property type="term" value="P:supramolecular fiber organization"/>
    <property type="evidence" value="ECO:0000266"/>
    <property type="project" value="RGD"/>
</dbReference>
<dbReference type="InterPro" id="IPR008408">
    <property type="entry name" value="BASP1"/>
</dbReference>
<dbReference type="PANTHER" id="PTHR23212">
    <property type="entry name" value="BRAIN ACID SOLUBLE PROTEIN 1"/>
    <property type="match status" value="1"/>
</dbReference>
<dbReference type="PANTHER" id="PTHR23212:SF0">
    <property type="entry name" value="BRAIN ACID SOLUBLE PROTEIN 1"/>
    <property type="match status" value="1"/>
</dbReference>
<dbReference type="Pfam" id="PF05466">
    <property type="entry name" value="BASP1"/>
    <property type="match status" value="1"/>
</dbReference>
<reference key="1">
    <citation type="journal article" date="1993" name="J. Biol. Chem.">
        <title>Purification and molecular cloning of a novel acidic calmodulin binding protein from rat brain.</title>
        <authorList>
            <person name="Maekawa S."/>
            <person name="Maekawa M."/>
            <person name="Hattori S."/>
            <person name="Nakamura S."/>
        </authorList>
    </citation>
    <scope>NUCLEOTIDE SEQUENCE [MRNA]</scope>
    <scope>PARTIAL PROTEIN SEQUENCE</scope>
    <source>
        <tissue>Brain</tissue>
    </source>
</reference>
<reference key="2">
    <citation type="submission" date="2007-09" db="UniProtKB">
        <authorList>
            <person name="Lubec G."/>
            <person name="Chen W.-Q."/>
            <person name="Kang S.U."/>
            <person name="Lubec S."/>
        </authorList>
    </citation>
    <scope>PROTEIN SEQUENCE OF 11-18; 39-52; 91-157 AND 179-220</scope>
    <scope>IDENTIFICATION BY MASS SPECTROMETRY</scope>
    <source>
        <strain>Sprague-Dawley</strain>
        <tissue>Brain</tissue>
        <tissue>Hippocampus</tissue>
    </source>
</reference>
<reference key="3">
    <citation type="journal article" date="1997" name="Biochimie">
        <title>The BASP1 family of myristoylated proteins abundant in axonal termini. Primary structure analysis and physico-chemical properties.</title>
        <authorList>
            <person name="Mosevitsky M.I."/>
            <person name="Capony J.-P."/>
            <person name="Skladchikova G.Y.U."/>
            <person name="Novitskaya V.A."/>
            <person name="Plekhanov A.Y.U."/>
            <person name="Zakharov V.V."/>
        </authorList>
    </citation>
    <scope>PARTIAL PROTEIN SEQUENCE</scope>
    <source>
        <tissue>Brain</tissue>
    </source>
</reference>
<reference key="4">
    <citation type="journal article" date="1994" name="Biochim. Biophys. Acta">
        <title>Expression and myristoylation of NAP-22 using a baculovirus transfer vector system.</title>
        <authorList>
            <person name="Maekawa S."/>
            <person name="Matsuura Y."/>
            <person name="Nakaruma S."/>
        </authorList>
    </citation>
    <scope>MYRISTOYLATION AT GLY-2</scope>
</reference>
<reference key="5">
    <citation type="journal article" date="2012" name="Nat. Commun.">
        <title>Quantitative maps of protein phosphorylation sites across 14 different rat organs and tissues.</title>
        <authorList>
            <person name="Lundby A."/>
            <person name="Secher A."/>
            <person name="Lage K."/>
            <person name="Nordsborg N.B."/>
            <person name="Dmytriyev A."/>
            <person name="Lundby C."/>
            <person name="Olsen J.V."/>
        </authorList>
    </citation>
    <scope>PHOSPHORYLATION [LARGE SCALE ANALYSIS] AT SER-91; SER-127 AND SER-130</scope>
    <scope>IDENTIFICATION BY MASS SPECTROMETRY [LARGE SCALE ANALYSIS]</scope>
</reference>
<protein>
    <recommendedName>
        <fullName>Brain acid soluble protein 1</fullName>
    </recommendedName>
    <alternativeName>
        <fullName>22 kDa neuronal tissue-enriched acidic protein</fullName>
    </alternativeName>
    <alternativeName>
        <fullName>Neuronal axonal membrane protein NAP-22</fullName>
    </alternativeName>
</protein>
<name>BASP1_RAT</name>
<comment type="subcellular location">
    <subcellularLocation>
        <location>Cell membrane</location>
        <topology>Lipid-anchor</topology>
    </subcellularLocation>
    <subcellularLocation>
        <location>Cell projection</location>
        <location>Growth cone</location>
    </subcellularLocation>
    <text>Associated with the membranes of growth cones that form the tips of elongating axons.</text>
</comment>
<comment type="tissue specificity">
    <text>Brain.</text>
</comment>
<comment type="similarity">
    <text evidence="5">Belongs to the BASP1 family.</text>
</comment>
<keyword id="KW-0112">Calmodulin-binding</keyword>
<keyword id="KW-1003">Cell membrane</keyword>
<keyword id="KW-0966">Cell projection</keyword>
<keyword id="KW-0903">Direct protein sequencing</keyword>
<keyword id="KW-1017">Isopeptide bond</keyword>
<keyword id="KW-0449">Lipoprotein</keyword>
<keyword id="KW-0472">Membrane</keyword>
<keyword id="KW-0519">Myristate</keyword>
<keyword id="KW-0597">Phosphoprotein</keyword>
<keyword id="KW-1185">Reference proteome</keyword>
<keyword id="KW-0832">Ubl conjugation</keyword>
<organism>
    <name type="scientific">Rattus norvegicus</name>
    <name type="common">Rat</name>
    <dbReference type="NCBI Taxonomy" id="10116"/>
    <lineage>
        <taxon>Eukaryota</taxon>
        <taxon>Metazoa</taxon>
        <taxon>Chordata</taxon>
        <taxon>Craniata</taxon>
        <taxon>Vertebrata</taxon>
        <taxon>Euteleostomi</taxon>
        <taxon>Mammalia</taxon>
        <taxon>Eutheria</taxon>
        <taxon>Euarchontoglires</taxon>
        <taxon>Glires</taxon>
        <taxon>Rodentia</taxon>
        <taxon>Myomorpha</taxon>
        <taxon>Muroidea</taxon>
        <taxon>Muridae</taxon>
        <taxon>Murinae</taxon>
        <taxon>Rattus</taxon>
    </lineage>
</organism>
<gene>
    <name type="primary">Basp1</name>
    <name type="synonym">Nap22</name>
</gene>
<accession>Q05175</accession>
<evidence type="ECO:0000250" key="1">
    <source>
        <dbReference type="UniProtKB" id="P80723"/>
    </source>
</evidence>
<evidence type="ECO:0000250" key="2">
    <source>
        <dbReference type="UniProtKB" id="Q91XV3"/>
    </source>
</evidence>
<evidence type="ECO:0000256" key="3">
    <source>
        <dbReference type="SAM" id="MobiDB-lite"/>
    </source>
</evidence>
<evidence type="ECO:0000269" key="4">
    <source>
    </source>
</evidence>
<evidence type="ECO:0000305" key="5"/>
<evidence type="ECO:0007744" key="6">
    <source>
    </source>
</evidence>